<name>S36A1_HUMAN</name>
<feature type="chain" id="PRO_0000093825" description="Proton-coupled amino acid transporter 1">
    <location>
        <begin position="1"/>
        <end position="476"/>
    </location>
</feature>
<feature type="topological domain" description="Cytoplasmic" evidence="3">
    <location>
        <begin position="1"/>
        <end position="51"/>
    </location>
</feature>
<feature type="transmembrane region" description="Helical; Name=1" evidence="3">
    <location>
        <begin position="52"/>
        <end position="72"/>
    </location>
</feature>
<feature type="topological domain" description="Extracellular" evidence="3">
    <location>
        <begin position="73"/>
        <end position="78"/>
    </location>
</feature>
<feature type="transmembrane region" description="Helical; Name=2" evidence="3">
    <location>
        <begin position="79"/>
        <end position="99"/>
    </location>
</feature>
<feature type="topological domain" description="Cytoplasmic" evidence="3">
    <location>
        <begin position="100"/>
        <end position="141"/>
    </location>
</feature>
<feature type="transmembrane region" description="Helical; Name=3" evidence="3">
    <location>
        <begin position="142"/>
        <end position="162"/>
    </location>
</feature>
<feature type="topological domain" description="Extracellular" evidence="3">
    <location>
        <begin position="163"/>
        <end position="190"/>
    </location>
</feature>
<feature type="transmembrane region" description="Helical; Name=4" evidence="3">
    <location>
        <begin position="191"/>
        <end position="211"/>
    </location>
</feature>
<feature type="topological domain" description="Cytoplasmic" evidence="3">
    <location>
        <begin position="212"/>
        <end position="215"/>
    </location>
</feature>
<feature type="transmembrane region" description="Helical; Name=5" evidence="3">
    <location>
        <begin position="216"/>
        <end position="236"/>
    </location>
</feature>
<feature type="topological domain" description="Extracellular" evidence="3">
    <location>
        <begin position="237"/>
        <end position="257"/>
    </location>
</feature>
<feature type="transmembrane region" description="Helical; Name=6" evidence="3">
    <location>
        <begin position="258"/>
        <end position="278"/>
    </location>
</feature>
<feature type="topological domain" description="Cytoplasmic" evidence="3">
    <location>
        <begin position="279"/>
        <end position="289"/>
    </location>
</feature>
<feature type="transmembrane region" description="Helical; Name=7" evidence="3">
    <location>
        <begin position="290"/>
        <end position="310"/>
    </location>
</feature>
<feature type="topological domain" description="Extracellular" evidence="3">
    <location>
        <begin position="311"/>
        <end position="342"/>
    </location>
</feature>
<feature type="transmembrane region" description="Helical; Name=8" evidence="3">
    <location>
        <begin position="343"/>
        <end position="363"/>
    </location>
</feature>
<feature type="topological domain" description="Cytoplasmic" evidence="3">
    <location>
        <begin position="364"/>
        <end position="372"/>
    </location>
</feature>
<feature type="transmembrane region" description="Helical; Name=9" evidence="3">
    <location>
        <begin position="373"/>
        <end position="393"/>
    </location>
</feature>
<feature type="topological domain" description="Extracellular" evidence="3">
    <location>
        <begin position="394"/>
        <end position="397"/>
    </location>
</feature>
<feature type="transmembrane region" description="Helical; Name=10" evidence="3">
    <location>
        <begin position="398"/>
        <end position="418"/>
    </location>
</feature>
<feature type="topological domain" description="Cytoplasmic" evidence="3">
    <location>
        <begin position="419"/>
        <end position="439"/>
    </location>
</feature>
<feature type="transmembrane region" description="Helical; Name=11" evidence="3">
    <location>
        <begin position="440"/>
        <end position="460"/>
    </location>
</feature>
<feature type="topological domain" description="Extracellular" evidence="3">
    <location>
        <begin position="461"/>
        <end position="476"/>
    </location>
</feature>
<feature type="region of interest" description="Disordered" evidence="4">
    <location>
        <begin position="1"/>
        <end position="32"/>
    </location>
</feature>
<feature type="compositionally biased region" description="Basic and acidic residues" evidence="4">
    <location>
        <begin position="1"/>
        <end position="15"/>
    </location>
</feature>
<feature type="glycosylation site" description="N-linked (GlcNAc...) asparagine" evidence="3">
    <location>
        <position position="174"/>
    </location>
</feature>
<feature type="glycosylation site" description="N-linked (GlcNAc...) asparagine" evidence="3">
    <location>
        <position position="183"/>
    </location>
</feature>
<feature type="glycosylation site" description="N-linked (GlcNAc...) asparagine" evidence="3">
    <location>
        <position position="470"/>
    </location>
</feature>
<feature type="disulfide bond" evidence="8">
    <location>
        <begin position="180"/>
        <end position="329"/>
    </location>
</feature>
<feature type="splice variant" id="VSP_044390" description="In isoform 3." evidence="11">
    <original>RI</original>
    <variation>IL</variation>
    <location>
        <begin position="242"/>
        <end position="243"/>
    </location>
</feature>
<feature type="splice variant" id="VSP_044391" description="In isoform 3." evidence="11">
    <location>
        <begin position="244"/>
        <end position="476"/>
    </location>
</feature>
<feature type="splice variant" id="VSP_044392" description="In isoform 2." evidence="11">
    <location>
        <begin position="387"/>
        <end position="476"/>
    </location>
</feature>
<feature type="sequence variant" id="VAR_048122" description="In dbSNP:rs9687945.">
    <original>F</original>
    <variation>L</variation>
    <location>
        <position position="362"/>
    </location>
</feature>
<feature type="mutagenesis site" description="Loss amino acid:proton symporter activity. No effect on localization to the plasma membrane." evidence="8">
    <original>C</original>
    <variation>A</variation>
    <variation>S</variation>
    <location>
        <position position="180"/>
    </location>
</feature>
<feature type="mutagenesis site" description="Loss amino acid:proton symporter activity. No effect on localization to the plasma membrane." evidence="8">
    <original>C</original>
    <variation>A</variation>
    <variation>S</variation>
    <location>
        <position position="329"/>
    </location>
</feature>
<feature type="mutagenesis site" description="No effect on amino acid:proton symporter activity. No effect on localization to the plasma membrane." evidence="8">
    <original>C</original>
    <variation>A</variation>
    <variation>S</variation>
    <location>
        <position position="473"/>
    </location>
</feature>
<feature type="sequence conflict" description="In Ref. 7; BAB71435." evidence="12" ref="7">
    <original>V</original>
    <variation>A</variation>
    <location>
        <position position="72"/>
    </location>
</feature>
<feature type="sequence conflict" description="In Ref. 2; AAP47194." evidence="12" ref="2">
    <original>P</original>
    <variation>L</variation>
    <location>
        <position position="394"/>
    </location>
</feature>
<feature type="sequence conflict" description="In Ref. 2; AAP47194." evidence="12" ref="2">
    <original>V</original>
    <variation>G</variation>
    <location>
        <position position="446"/>
    </location>
</feature>
<feature type="sequence conflict" description="In Ref. 2; AAP47194." evidence="12" ref="2">
    <original>VV</original>
    <variation>GG</variation>
    <location>
        <begin position="449"/>
        <end position="450"/>
    </location>
</feature>
<dbReference type="EMBL" id="AY162213">
    <property type="protein sequence ID" value="AAO11787.1"/>
    <property type="molecule type" value="mRNA"/>
</dbReference>
<dbReference type="EMBL" id="AF516142">
    <property type="protein sequence ID" value="AAP47194.1"/>
    <property type="molecule type" value="mRNA"/>
</dbReference>
<dbReference type="EMBL" id="AY227111">
    <property type="protein sequence ID" value="AAO37091.1"/>
    <property type="molecule type" value="mRNA"/>
</dbReference>
<dbReference type="EMBL" id="AY227112">
    <property type="protein sequence ID" value="AAO37092.1"/>
    <property type="molecule type" value="mRNA"/>
</dbReference>
<dbReference type="EMBL" id="AY227113">
    <property type="protein sequence ID" value="AAO37093.1"/>
    <property type="molecule type" value="mRNA"/>
</dbReference>
<dbReference type="EMBL" id="BX537963">
    <property type="protein sequence ID" value="CAD97927.1"/>
    <property type="molecule type" value="mRNA"/>
</dbReference>
<dbReference type="EMBL" id="AC034205">
    <property type="status" value="NOT_ANNOTATED_CDS"/>
    <property type="molecule type" value="Genomic_DNA"/>
</dbReference>
<dbReference type="EMBL" id="BC136437">
    <property type="protein sequence ID" value="AAI36438.1"/>
    <property type="molecule type" value="mRNA"/>
</dbReference>
<dbReference type="EMBL" id="BC136438">
    <property type="protein sequence ID" value="AAI36439.1"/>
    <property type="molecule type" value="mRNA"/>
</dbReference>
<dbReference type="EMBL" id="AK057340">
    <property type="protein sequence ID" value="BAB71435.1"/>
    <property type="status" value="ALT_SEQ"/>
    <property type="molecule type" value="mRNA"/>
</dbReference>
<dbReference type="EMBL" id="BK001052">
    <property type="protein sequence ID" value="DAA01126.1"/>
    <property type="molecule type" value="mRNA"/>
</dbReference>
<dbReference type="CCDS" id="CCDS4316.1">
    <molecule id="Q7Z2H8-1"/>
</dbReference>
<dbReference type="CCDS" id="CCDS78073.1">
    <molecule id="Q7Z2H8-4"/>
</dbReference>
<dbReference type="CCDS" id="CCDS83035.1">
    <molecule id="Q7Z2H8-3"/>
</dbReference>
<dbReference type="RefSeq" id="NP_001295079.1">
    <molecule id="Q7Z2H8-3"/>
    <property type="nucleotide sequence ID" value="NM_001308150.2"/>
</dbReference>
<dbReference type="RefSeq" id="NP_001295080.1">
    <molecule id="Q7Z2H8-4"/>
    <property type="nucleotide sequence ID" value="NM_001308151.2"/>
</dbReference>
<dbReference type="RefSeq" id="NP_510968.2">
    <molecule id="Q7Z2H8-1"/>
    <property type="nucleotide sequence ID" value="NM_078483.3"/>
</dbReference>
<dbReference type="RefSeq" id="XP_005268443.1">
    <property type="nucleotide sequence ID" value="XM_005268386.1"/>
</dbReference>
<dbReference type="RefSeq" id="XP_011535883.1">
    <molecule id="Q7Z2H8-1"/>
    <property type="nucleotide sequence ID" value="XM_011537581.2"/>
</dbReference>
<dbReference type="RefSeq" id="XP_011535885.1">
    <property type="nucleotide sequence ID" value="XM_011537583.2"/>
</dbReference>
<dbReference type="RefSeq" id="XP_011535886.1">
    <molecule id="Q7Z2H8-1"/>
    <property type="nucleotide sequence ID" value="XM_011537584.3"/>
</dbReference>
<dbReference type="RefSeq" id="XP_011535887.1">
    <molecule id="Q7Z2H8-1"/>
    <property type="nucleotide sequence ID" value="XM_011537585.1"/>
</dbReference>
<dbReference type="RefSeq" id="XP_011535888.1">
    <molecule id="Q7Z2H8-1"/>
    <property type="nucleotide sequence ID" value="XM_011537586.3"/>
</dbReference>
<dbReference type="RefSeq" id="XP_011535889.1">
    <molecule id="Q7Z2H8-1"/>
    <property type="nucleotide sequence ID" value="XM_011537587.4"/>
</dbReference>
<dbReference type="RefSeq" id="XP_011535890.1">
    <property type="nucleotide sequence ID" value="XM_011537588.2"/>
</dbReference>
<dbReference type="RefSeq" id="XP_011535891.1">
    <molecule id="Q7Z2H8-1"/>
    <property type="nucleotide sequence ID" value="XM_011537589.4"/>
</dbReference>
<dbReference type="RefSeq" id="XP_011535892.1">
    <molecule id="Q7Z2H8-1"/>
    <property type="nucleotide sequence ID" value="XM_011537590.2"/>
</dbReference>
<dbReference type="RefSeq" id="XP_011535893.1">
    <molecule id="Q7Z2H8-1"/>
    <property type="nucleotide sequence ID" value="XM_011537591.2"/>
</dbReference>
<dbReference type="RefSeq" id="XP_011535894.1">
    <molecule id="Q7Z2H8-1"/>
    <property type="nucleotide sequence ID" value="XM_011537592.3"/>
</dbReference>
<dbReference type="RefSeq" id="XP_016864705.1">
    <molecule id="Q7Z2H8-1"/>
    <property type="nucleotide sequence ID" value="XM_017009216.2"/>
</dbReference>
<dbReference type="RefSeq" id="XP_016864709.1">
    <property type="nucleotide sequence ID" value="XM_017009220.1"/>
</dbReference>
<dbReference type="RefSeq" id="XP_047272877.1">
    <molecule id="Q7Z2H8-1"/>
    <property type="nucleotide sequence ID" value="XM_047416921.1"/>
</dbReference>
<dbReference type="RefSeq" id="XP_047272879.1">
    <molecule id="Q7Z2H8-1"/>
    <property type="nucleotide sequence ID" value="XM_047416923.1"/>
</dbReference>
<dbReference type="RefSeq" id="XP_047272880.1">
    <molecule id="Q7Z2H8-1"/>
    <property type="nucleotide sequence ID" value="XM_047416924.1"/>
</dbReference>
<dbReference type="RefSeq" id="XP_054208000.1">
    <molecule id="Q7Z2H8-1"/>
    <property type="nucleotide sequence ID" value="XM_054352025.1"/>
</dbReference>
<dbReference type="RefSeq" id="XP_054208001.1">
    <molecule id="Q7Z2H8-1"/>
    <property type="nucleotide sequence ID" value="XM_054352026.1"/>
</dbReference>
<dbReference type="RefSeq" id="XP_054208002.1">
    <molecule id="Q7Z2H8-1"/>
    <property type="nucleotide sequence ID" value="XM_054352027.1"/>
</dbReference>
<dbReference type="RefSeq" id="XP_054208003.1">
    <molecule id="Q7Z2H8-1"/>
    <property type="nucleotide sequence ID" value="XM_054352028.1"/>
</dbReference>
<dbReference type="RefSeq" id="XP_054208004.1">
    <molecule id="Q7Z2H8-1"/>
    <property type="nucleotide sequence ID" value="XM_054352029.1"/>
</dbReference>
<dbReference type="RefSeq" id="XP_054208005.1">
    <molecule id="Q7Z2H8-1"/>
    <property type="nucleotide sequence ID" value="XM_054352030.1"/>
</dbReference>
<dbReference type="RefSeq" id="XP_054208006.1">
    <molecule id="Q7Z2H8-1"/>
    <property type="nucleotide sequence ID" value="XM_054352031.1"/>
</dbReference>
<dbReference type="RefSeq" id="XP_054208007.1">
    <molecule id="Q7Z2H8-1"/>
    <property type="nucleotide sequence ID" value="XM_054352032.1"/>
</dbReference>
<dbReference type="RefSeq" id="XP_054208008.1">
    <molecule id="Q7Z2H8-1"/>
    <property type="nucleotide sequence ID" value="XM_054352033.1"/>
</dbReference>
<dbReference type="RefSeq" id="XP_054208009.1">
    <molecule id="Q7Z2H8-1"/>
    <property type="nucleotide sequence ID" value="XM_054352034.1"/>
</dbReference>
<dbReference type="RefSeq" id="XP_054208010.1">
    <molecule id="Q7Z2H8-1"/>
    <property type="nucleotide sequence ID" value="XM_054352035.1"/>
</dbReference>
<dbReference type="RefSeq" id="XP_054208011.1">
    <molecule id="Q7Z2H8-1"/>
    <property type="nucleotide sequence ID" value="XM_054352036.1"/>
</dbReference>
<dbReference type="RefSeq" id="XP_054208018.1">
    <molecule id="Q7Z2H8-1"/>
    <property type="nucleotide sequence ID" value="XM_054352043.1"/>
</dbReference>
<dbReference type="SMR" id="Q7Z2H8"/>
<dbReference type="BioGRID" id="128503">
    <property type="interactions" value="13"/>
</dbReference>
<dbReference type="FunCoup" id="Q7Z2H8">
    <property type="interactions" value="1289"/>
</dbReference>
<dbReference type="IntAct" id="Q7Z2H8">
    <property type="interactions" value="10"/>
</dbReference>
<dbReference type="STRING" id="9606.ENSP00000243389"/>
<dbReference type="BindingDB" id="Q7Z2H8"/>
<dbReference type="ChEMBL" id="CHEMBL1914279"/>
<dbReference type="DrugBank" id="DB00160">
    <property type="generic name" value="Alanine"/>
</dbReference>
<dbReference type="DrugBank" id="DB02853">
    <property type="generic name" value="D-Proline"/>
</dbReference>
<dbReference type="DrugBank" id="DB06554">
    <property type="generic name" value="Gaboxadol"/>
</dbReference>
<dbReference type="DrugBank" id="DB02530">
    <property type="generic name" value="gamma-Aminobutyric acid"/>
</dbReference>
<dbReference type="DrugBank" id="DB00145">
    <property type="generic name" value="Glycine"/>
</dbReference>
<dbReference type="DrugBank" id="DB08847">
    <property type="generic name" value="Hydroxyproline"/>
</dbReference>
<dbReference type="DrugBank" id="DB00563">
    <property type="generic name" value="Methotrexate"/>
</dbReference>
<dbReference type="DrugBank" id="DB08849">
    <property type="generic name" value="Nipecotic acid"/>
</dbReference>
<dbReference type="DrugBank" id="DB08835">
    <property type="generic name" value="Spaglumic acid"/>
</dbReference>
<dbReference type="DrugBank" id="DB01956">
    <property type="generic name" value="Taurine"/>
</dbReference>
<dbReference type="DrugBank" id="DB01080">
    <property type="generic name" value="Vigabatrin"/>
</dbReference>
<dbReference type="DrugCentral" id="Q7Z2H8"/>
<dbReference type="GuidetoPHARMACOLOGY" id="1161"/>
<dbReference type="TCDB" id="2.A.18.8.7">
    <property type="family name" value="the amino acid/auxin permease (aaap) family"/>
</dbReference>
<dbReference type="GlyCosmos" id="Q7Z2H8">
    <property type="glycosylation" value="3 sites, No reported glycans"/>
</dbReference>
<dbReference type="GlyGen" id="Q7Z2H8">
    <property type="glycosylation" value="3 sites"/>
</dbReference>
<dbReference type="iPTMnet" id="Q7Z2H8"/>
<dbReference type="PhosphoSitePlus" id="Q7Z2H8"/>
<dbReference type="SwissPalm" id="Q7Z2H8"/>
<dbReference type="BioMuta" id="SLC36A1"/>
<dbReference type="DMDM" id="51316800"/>
<dbReference type="jPOST" id="Q7Z2H8"/>
<dbReference type="MassIVE" id="Q7Z2H8"/>
<dbReference type="PaxDb" id="9606-ENSP00000243389"/>
<dbReference type="PeptideAtlas" id="Q7Z2H8"/>
<dbReference type="ProteomicsDB" id="10285"/>
<dbReference type="ProteomicsDB" id="68959">
    <molecule id="Q7Z2H8-1"/>
</dbReference>
<dbReference type="TopDownProteomics" id="Q7Z2H8-1">
    <molecule id="Q7Z2H8-1"/>
</dbReference>
<dbReference type="Antibodypedia" id="49166">
    <property type="antibodies" value="81 antibodies from 17 providers"/>
</dbReference>
<dbReference type="DNASU" id="206358"/>
<dbReference type="Ensembl" id="ENST00000243389.8">
    <molecule id="Q7Z2H8-1"/>
    <property type="protein sequence ID" value="ENSP00000243389.3"/>
    <property type="gene ID" value="ENSG00000123643.14"/>
</dbReference>
<dbReference type="Ensembl" id="ENST00000429484.6">
    <molecule id="Q7Z2H8-4"/>
    <property type="protein sequence ID" value="ENSP00000395640.2"/>
    <property type="gene ID" value="ENSG00000123643.14"/>
</dbReference>
<dbReference type="Ensembl" id="ENST00000520701.5">
    <molecule id="Q7Z2H8-1"/>
    <property type="protein sequence ID" value="ENSP00000428140.1"/>
    <property type="gene ID" value="ENSG00000123643.14"/>
</dbReference>
<dbReference type="GeneID" id="206358"/>
<dbReference type="KEGG" id="hsa:206358"/>
<dbReference type="MANE-Select" id="ENST00000243389.8">
    <property type="protein sequence ID" value="ENSP00000243389.3"/>
    <property type="RefSeq nucleotide sequence ID" value="NM_078483.4"/>
    <property type="RefSeq protein sequence ID" value="NP_510968.2"/>
</dbReference>
<dbReference type="UCSC" id="uc003luc.4">
    <molecule id="Q7Z2H8-1"/>
    <property type="organism name" value="human"/>
</dbReference>
<dbReference type="AGR" id="HGNC:18761"/>
<dbReference type="CTD" id="206358"/>
<dbReference type="DisGeNET" id="206358"/>
<dbReference type="GeneCards" id="SLC36A1"/>
<dbReference type="HGNC" id="HGNC:18761">
    <property type="gene designation" value="SLC36A1"/>
</dbReference>
<dbReference type="HPA" id="ENSG00000123643">
    <property type="expression patterns" value="Tissue enhanced (parathyroid)"/>
</dbReference>
<dbReference type="MIM" id="606561">
    <property type="type" value="gene"/>
</dbReference>
<dbReference type="neXtProt" id="NX_Q7Z2H8"/>
<dbReference type="OpenTargets" id="ENSG00000123643"/>
<dbReference type="PharmGKB" id="PA134870308"/>
<dbReference type="VEuPathDB" id="HostDB:ENSG00000123643"/>
<dbReference type="eggNOG" id="KOG1304">
    <property type="taxonomic scope" value="Eukaryota"/>
</dbReference>
<dbReference type="GeneTree" id="ENSGT00940000156583"/>
<dbReference type="HOGENOM" id="CLU_009646_0_2_1"/>
<dbReference type="InParanoid" id="Q7Z2H8"/>
<dbReference type="OMA" id="RTGTSFC"/>
<dbReference type="OrthoDB" id="1684102at2759"/>
<dbReference type="PAN-GO" id="Q7Z2H8">
    <property type="GO annotations" value="8 GO annotations based on evolutionary models"/>
</dbReference>
<dbReference type="PhylomeDB" id="Q7Z2H8"/>
<dbReference type="TreeFam" id="TF314873"/>
<dbReference type="PathwayCommons" id="Q7Z2H8"/>
<dbReference type="Reactome" id="R-HSA-352230">
    <property type="pathway name" value="Amino acid transport across the plasma membrane"/>
</dbReference>
<dbReference type="Reactome" id="R-HSA-428559">
    <property type="pathway name" value="Proton-coupled neutral amino acid transporters"/>
</dbReference>
<dbReference type="SignaLink" id="Q7Z2H8"/>
<dbReference type="SIGNOR" id="Q7Z2H8"/>
<dbReference type="BioGRID-ORCS" id="206358">
    <property type="hits" value="12 hits in 1153 CRISPR screens"/>
</dbReference>
<dbReference type="ChiTaRS" id="SLC36A1">
    <property type="organism name" value="human"/>
</dbReference>
<dbReference type="GeneWiki" id="SLC36A1"/>
<dbReference type="GenomeRNAi" id="206358"/>
<dbReference type="Pharos" id="Q7Z2H8">
    <property type="development level" value="Tchem"/>
</dbReference>
<dbReference type="PRO" id="PR:Q7Z2H8"/>
<dbReference type="Proteomes" id="UP000005640">
    <property type="component" value="Chromosome 5"/>
</dbReference>
<dbReference type="RNAct" id="Q7Z2H8">
    <property type="molecule type" value="protein"/>
</dbReference>
<dbReference type="Bgee" id="ENSG00000123643">
    <property type="expression patterns" value="Expressed in jejunal mucosa and 189 other cell types or tissues"/>
</dbReference>
<dbReference type="ExpressionAtlas" id="Q7Z2H8">
    <property type="expression patterns" value="baseline and differential"/>
</dbReference>
<dbReference type="GO" id="GO:0016324">
    <property type="term" value="C:apical plasma membrane"/>
    <property type="evidence" value="ECO:0007669"/>
    <property type="project" value="UniProtKB-SubCell"/>
</dbReference>
<dbReference type="GO" id="GO:0005783">
    <property type="term" value="C:endoplasmic reticulum"/>
    <property type="evidence" value="ECO:0000314"/>
    <property type="project" value="LIFEdb"/>
</dbReference>
<dbReference type="GO" id="GO:0005765">
    <property type="term" value="C:lysosomal membrane"/>
    <property type="evidence" value="ECO:0007005"/>
    <property type="project" value="UniProtKB"/>
</dbReference>
<dbReference type="GO" id="GO:0005886">
    <property type="term" value="C:plasma membrane"/>
    <property type="evidence" value="ECO:0000304"/>
    <property type="project" value="Reactome"/>
</dbReference>
<dbReference type="GO" id="GO:0005774">
    <property type="term" value="C:vacuolar membrane"/>
    <property type="evidence" value="ECO:0000318"/>
    <property type="project" value="GO_Central"/>
</dbReference>
<dbReference type="GO" id="GO:0015411">
    <property type="term" value="F:ABC-type taurine transporter transporter activity"/>
    <property type="evidence" value="ECO:0000314"/>
    <property type="project" value="ARUK-UCL"/>
</dbReference>
<dbReference type="GO" id="GO:0022858">
    <property type="term" value="F:alanine transmembrane transporter activity"/>
    <property type="evidence" value="ECO:0000314"/>
    <property type="project" value="ARUK-UCL"/>
</dbReference>
<dbReference type="GO" id="GO:0015171">
    <property type="term" value="F:amino acid transmembrane transporter activity"/>
    <property type="evidence" value="ECO:0000304"/>
    <property type="project" value="Reactome"/>
</dbReference>
<dbReference type="GO" id="GO:0005280">
    <property type="term" value="F:amino acid:proton symporter activity"/>
    <property type="evidence" value="ECO:0000314"/>
    <property type="project" value="UniProtKB"/>
</dbReference>
<dbReference type="GO" id="GO:0015187">
    <property type="term" value="F:glycine transmembrane transporter activity"/>
    <property type="evidence" value="ECO:0000318"/>
    <property type="project" value="GO_Central"/>
</dbReference>
<dbReference type="GO" id="GO:0015180">
    <property type="term" value="F:L-alanine transmembrane transporter activity"/>
    <property type="evidence" value="ECO:0000318"/>
    <property type="project" value="GO_Central"/>
</dbReference>
<dbReference type="GO" id="GO:0015193">
    <property type="term" value="F:L-proline transmembrane transporter activity"/>
    <property type="evidence" value="ECO:0000318"/>
    <property type="project" value="GO_Central"/>
</dbReference>
<dbReference type="GO" id="GO:0005297">
    <property type="term" value="F:proline:proton symporter activity"/>
    <property type="evidence" value="ECO:0000314"/>
    <property type="project" value="UniProtKB"/>
</dbReference>
<dbReference type="GO" id="GO:0032328">
    <property type="term" value="P:alanine transport"/>
    <property type="evidence" value="ECO:0000314"/>
    <property type="project" value="ARUK-UCL"/>
</dbReference>
<dbReference type="GO" id="GO:0089718">
    <property type="term" value="P:amino acid import across plasma membrane"/>
    <property type="evidence" value="ECO:0000314"/>
    <property type="project" value="ARUK-UCL"/>
</dbReference>
<dbReference type="GO" id="GO:0006865">
    <property type="term" value="P:amino acid transport"/>
    <property type="evidence" value="ECO:0000304"/>
    <property type="project" value="Reactome"/>
</dbReference>
<dbReference type="GO" id="GO:0015816">
    <property type="term" value="P:glycine transport"/>
    <property type="evidence" value="ECO:0000318"/>
    <property type="project" value="GO_Central"/>
</dbReference>
<dbReference type="GO" id="GO:0015808">
    <property type="term" value="P:L-alanine transport"/>
    <property type="evidence" value="ECO:0000318"/>
    <property type="project" value="GO_Central"/>
</dbReference>
<dbReference type="GO" id="GO:0006811">
    <property type="term" value="P:monoatomic ion transport"/>
    <property type="evidence" value="ECO:0000304"/>
    <property type="project" value="Reactome"/>
</dbReference>
<dbReference type="GO" id="GO:0035524">
    <property type="term" value="P:proline transmembrane transport"/>
    <property type="evidence" value="ECO:0000318"/>
    <property type="project" value="GO_Central"/>
</dbReference>
<dbReference type="GO" id="GO:0015824">
    <property type="term" value="P:proline transport"/>
    <property type="evidence" value="ECO:0007669"/>
    <property type="project" value="Ensembl"/>
</dbReference>
<dbReference type="GO" id="GO:1902600">
    <property type="term" value="P:proton transmembrane transport"/>
    <property type="evidence" value="ECO:0000318"/>
    <property type="project" value="GO_Central"/>
</dbReference>
<dbReference type="GO" id="GO:0015734">
    <property type="term" value="P:taurine transmembrane transport"/>
    <property type="evidence" value="ECO:0000314"/>
    <property type="project" value="ARUK-UCL"/>
</dbReference>
<dbReference type="InterPro" id="IPR013057">
    <property type="entry name" value="AA_transpt_TM"/>
</dbReference>
<dbReference type="PANTHER" id="PTHR22950">
    <property type="entry name" value="AMINO ACID TRANSPORTER"/>
    <property type="match status" value="1"/>
</dbReference>
<dbReference type="PANTHER" id="PTHR22950:SF188">
    <property type="entry name" value="PROTON-COUPLED AMINO ACID TRANSPORTER 1"/>
    <property type="match status" value="1"/>
</dbReference>
<dbReference type="Pfam" id="PF01490">
    <property type="entry name" value="Aa_trans"/>
    <property type="match status" value="1"/>
</dbReference>
<reference key="1">
    <citation type="journal article" date="2003" name="Genomics">
        <title>A cluster of proton/amino acid transporter genes in the human and mouse genomes.</title>
        <authorList>
            <person name="Boll M."/>
            <person name="Foltz M."/>
            <person name="Rubio-Aliaga I."/>
            <person name="Daniel H."/>
        </authorList>
    </citation>
    <scope>NUCLEOTIDE SEQUENCE [MRNA] (ISOFORM 1)</scope>
    <scope>FUNCTION</scope>
    <scope>TRANSPORTER ACTIVITY</scope>
    <scope>SUBCELLULAR LOCATION</scope>
    <source>
        <tissue>Intestine</tissue>
    </source>
</reference>
<reference key="2">
    <citation type="journal article" date="2003" name="J. Physiol. (Lond.)">
        <title>Structure, function and immunolocalization of a proton-coupled amino acid transporter (hPAT1) in the human intestinal cell line Caco-2.</title>
        <authorList>
            <person name="Chen Z."/>
            <person name="Fei Y.-J."/>
            <person name="Anderson C.M.H."/>
            <person name="Wake K.A."/>
            <person name="Miyauchi S."/>
            <person name="Huang W."/>
            <person name="Thwaites D.T."/>
            <person name="Ganapathy V."/>
        </authorList>
    </citation>
    <scope>NUCLEOTIDE SEQUENCE [MRNA] (ISOFORM 1)</scope>
    <scope>FUNCTION</scope>
    <scope>TRANSPORTER ACTIVITY</scope>
    <scope>BIOPHYSICOCHEMICAL PROPERTIES</scope>
    <scope>SUBCELLULAR LOCATION</scope>
</reference>
<reference key="3">
    <citation type="journal article" date="2004" name="Mamm. Genome">
        <title>Organization and expression of the SLC36 cluster of amino acid transporter genes.</title>
        <authorList>
            <person name="Bermingham J.R. Jr."/>
            <person name="Pennington J."/>
        </authorList>
    </citation>
    <scope>NUCLEOTIDE SEQUENCE [MRNA] (ISOFORMS 2 AND 3)</scope>
    <scope>NUCLEOTIDE SEQUENCE [MRNA] OF 164-476 (ISOFORM 1)</scope>
    <scope>ALTERNATIVE SPLICING</scope>
</reference>
<reference key="4">
    <citation type="journal article" date="2007" name="BMC Genomics">
        <title>The full-ORF clone resource of the German cDNA consortium.</title>
        <authorList>
            <person name="Bechtel S."/>
            <person name="Rosenfelder H."/>
            <person name="Duda A."/>
            <person name="Schmidt C.P."/>
            <person name="Ernst U."/>
            <person name="Wellenreuther R."/>
            <person name="Mehrle A."/>
            <person name="Schuster C."/>
            <person name="Bahr A."/>
            <person name="Bloecker H."/>
            <person name="Heubner D."/>
            <person name="Hoerlein A."/>
            <person name="Michel G."/>
            <person name="Wedler H."/>
            <person name="Koehrer K."/>
            <person name="Ottenwaelder B."/>
            <person name="Poustka A."/>
            <person name="Wiemann S."/>
            <person name="Schupp I."/>
        </authorList>
    </citation>
    <scope>NUCLEOTIDE SEQUENCE [LARGE SCALE MRNA] (ISOFORM 1)</scope>
    <source>
        <tissue>Endometrial tumor</tissue>
    </source>
</reference>
<reference key="5">
    <citation type="journal article" date="2004" name="Nature">
        <title>The DNA sequence and comparative analysis of human chromosome 5.</title>
        <authorList>
            <person name="Schmutz J."/>
            <person name="Martin J."/>
            <person name="Terry A."/>
            <person name="Couronne O."/>
            <person name="Grimwood J."/>
            <person name="Lowry S."/>
            <person name="Gordon L.A."/>
            <person name="Scott D."/>
            <person name="Xie G."/>
            <person name="Huang W."/>
            <person name="Hellsten U."/>
            <person name="Tran-Gyamfi M."/>
            <person name="She X."/>
            <person name="Prabhakar S."/>
            <person name="Aerts A."/>
            <person name="Altherr M."/>
            <person name="Bajorek E."/>
            <person name="Black S."/>
            <person name="Branscomb E."/>
            <person name="Caoile C."/>
            <person name="Challacombe J.F."/>
            <person name="Chan Y.M."/>
            <person name="Denys M."/>
            <person name="Detter J.C."/>
            <person name="Escobar J."/>
            <person name="Flowers D."/>
            <person name="Fotopulos D."/>
            <person name="Glavina T."/>
            <person name="Gomez M."/>
            <person name="Gonzales E."/>
            <person name="Goodstein D."/>
            <person name="Grigoriev I."/>
            <person name="Groza M."/>
            <person name="Hammon N."/>
            <person name="Hawkins T."/>
            <person name="Haydu L."/>
            <person name="Israni S."/>
            <person name="Jett J."/>
            <person name="Kadner K."/>
            <person name="Kimball H."/>
            <person name="Kobayashi A."/>
            <person name="Lopez F."/>
            <person name="Lou Y."/>
            <person name="Martinez D."/>
            <person name="Medina C."/>
            <person name="Morgan J."/>
            <person name="Nandkeshwar R."/>
            <person name="Noonan J.P."/>
            <person name="Pitluck S."/>
            <person name="Pollard M."/>
            <person name="Predki P."/>
            <person name="Priest J."/>
            <person name="Ramirez L."/>
            <person name="Retterer J."/>
            <person name="Rodriguez A."/>
            <person name="Rogers S."/>
            <person name="Salamov A."/>
            <person name="Salazar A."/>
            <person name="Thayer N."/>
            <person name="Tice H."/>
            <person name="Tsai M."/>
            <person name="Ustaszewska A."/>
            <person name="Vo N."/>
            <person name="Wheeler J."/>
            <person name="Wu K."/>
            <person name="Yang J."/>
            <person name="Dickson M."/>
            <person name="Cheng J.-F."/>
            <person name="Eichler E.E."/>
            <person name="Olsen A."/>
            <person name="Pennacchio L.A."/>
            <person name="Rokhsar D.S."/>
            <person name="Richardson P."/>
            <person name="Lucas S.M."/>
            <person name="Myers R.M."/>
            <person name="Rubin E.M."/>
        </authorList>
    </citation>
    <scope>NUCLEOTIDE SEQUENCE [LARGE SCALE GENOMIC DNA]</scope>
</reference>
<reference key="6">
    <citation type="journal article" date="2004" name="Genome Res.">
        <title>The status, quality, and expansion of the NIH full-length cDNA project: the Mammalian Gene Collection (MGC).</title>
        <authorList>
            <consortium name="The MGC Project Team"/>
        </authorList>
    </citation>
    <scope>NUCLEOTIDE SEQUENCE [LARGE SCALE MRNA] (ISOFORM 1)</scope>
    <source>
        <tissue>Testis</tissue>
    </source>
</reference>
<reference key="7">
    <citation type="journal article" date="2004" name="Nat. Genet.">
        <title>Complete sequencing and characterization of 21,243 full-length human cDNAs.</title>
        <authorList>
            <person name="Ota T."/>
            <person name="Suzuki Y."/>
            <person name="Nishikawa T."/>
            <person name="Otsuki T."/>
            <person name="Sugiyama T."/>
            <person name="Irie R."/>
            <person name="Wakamatsu A."/>
            <person name="Hayashi K."/>
            <person name="Sato H."/>
            <person name="Nagai K."/>
            <person name="Kimura K."/>
            <person name="Makita H."/>
            <person name="Sekine M."/>
            <person name="Obayashi M."/>
            <person name="Nishi T."/>
            <person name="Shibahara T."/>
            <person name="Tanaka T."/>
            <person name="Ishii S."/>
            <person name="Yamamoto J."/>
            <person name="Saito K."/>
            <person name="Kawai Y."/>
            <person name="Isono Y."/>
            <person name="Nakamura Y."/>
            <person name="Nagahari K."/>
            <person name="Murakami K."/>
            <person name="Yasuda T."/>
            <person name="Iwayanagi T."/>
            <person name="Wagatsuma M."/>
            <person name="Shiratori A."/>
            <person name="Sudo H."/>
            <person name="Hosoiri T."/>
            <person name="Kaku Y."/>
            <person name="Kodaira H."/>
            <person name="Kondo H."/>
            <person name="Sugawara M."/>
            <person name="Takahashi M."/>
            <person name="Kanda K."/>
            <person name="Yokoi T."/>
            <person name="Furuya T."/>
            <person name="Kikkawa E."/>
            <person name="Omura Y."/>
            <person name="Abe K."/>
            <person name="Kamihara K."/>
            <person name="Katsuta N."/>
            <person name="Sato K."/>
            <person name="Tanikawa M."/>
            <person name="Yamazaki M."/>
            <person name="Ninomiya K."/>
            <person name="Ishibashi T."/>
            <person name="Yamashita H."/>
            <person name="Murakawa K."/>
            <person name="Fujimori K."/>
            <person name="Tanai H."/>
            <person name="Kimata M."/>
            <person name="Watanabe M."/>
            <person name="Hiraoka S."/>
            <person name="Chiba Y."/>
            <person name="Ishida S."/>
            <person name="Ono Y."/>
            <person name="Takiguchi S."/>
            <person name="Watanabe S."/>
            <person name="Yosida M."/>
            <person name="Hotuta T."/>
            <person name="Kusano J."/>
            <person name="Kanehori K."/>
            <person name="Takahashi-Fujii A."/>
            <person name="Hara H."/>
            <person name="Tanase T.-O."/>
            <person name="Nomura Y."/>
            <person name="Togiya S."/>
            <person name="Komai F."/>
            <person name="Hara R."/>
            <person name="Takeuchi K."/>
            <person name="Arita M."/>
            <person name="Imose N."/>
            <person name="Musashino K."/>
            <person name="Yuuki H."/>
            <person name="Oshima A."/>
            <person name="Sasaki N."/>
            <person name="Aotsuka S."/>
            <person name="Yoshikawa Y."/>
            <person name="Matsunawa H."/>
            <person name="Ichihara T."/>
            <person name="Shiohata N."/>
            <person name="Sano S."/>
            <person name="Moriya S."/>
            <person name="Momiyama H."/>
            <person name="Satoh N."/>
            <person name="Takami S."/>
            <person name="Terashima Y."/>
            <person name="Suzuki O."/>
            <person name="Nakagawa S."/>
            <person name="Senoh A."/>
            <person name="Mizoguchi H."/>
            <person name="Goto Y."/>
            <person name="Shimizu F."/>
            <person name="Wakebe H."/>
            <person name="Hishigaki H."/>
            <person name="Watanabe T."/>
            <person name="Sugiyama A."/>
            <person name="Takemoto M."/>
            <person name="Kawakami B."/>
            <person name="Yamazaki M."/>
            <person name="Watanabe K."/>
            <person name="Kumagai A."/>
            <person name="Itakura S."/>
            <person name="Fukuzumi Y."/>
            <person name="Fujimori Y."/>
            <person name="Komiyama M."/>
            <person name="Tashiro H."/>
            <person name="Tanigami A."/>
            <person name="Fujiwara T."/>
            <person name="Ono T."/>
            <person name="Yamada K."/>
            <person name="Fujii Y."/>
            <person name="Ozaki K."/>
            <person name="Hirao M."/>
            <person name="Ohmori Y."/>
            <person name="Kawabata A."/>
            <person name="Hikiji T."/>
            <person name="Kobatake N."/>
            <person name="Inagaki H."/>
            <person name="Ikema Y."/>
            <person name="Okamoto S."/>
            <person name="Okitani R."/>
            <person name="Kawakami T."/>
            <person name="Noguchi S."/>
            <person name="Itoh T."/>
            <person name="Shigeta K."/>
            <person name="Senba T."/>
            <person name="Matsumura K."/>
            <person name="Nakajima Y."/>
            <person name="Mizuno T."/>
            <person name="Morinaga M."/>
            <person name="Sasaki M."/>
            <person name="Togashi T."/>
            <person name="Oyama M."/>
            <person name="Hata H."/>
            <person name="Watanabe M."/>
            <person name="Komatsu T."/>
            <person name="Mizushima-Sugano J."/>
            <person name="Satoh T."/>
            <person name="Shirai Y."/>
            <person name="Takahashi Y."/>
            <person name="Nakagawa K."/>
            <person name="Okumura K."/>
            <person name="Nagase T."/>
            <person name="Nomura N."/>
            <person name="Kikuchi H."/>
            <person name="Masuho Y."/>
            <person name="Yamashita R."/>
            <person name="Nakai K."/>
            <person name="Yada T."/>
            <person name="Nakamura Y."/>
            <person name="Ohara O."/>
            <person name="Isogai T."/>
            <person name="Sugano S."/>
        </authorList>
    </citation>
    <scope>NUCLEOTIDE SEQUENCE [LARGE SCALE MRNA] OF 1-356</scope>
    <source>
        <tissue>Testis</tissue>
    </source>
</reference>
<reference key="8">
    <citation type="journal article" date="2007" name="Traffic">
        <title>Integral and associated lysosomal membrane proteins.</title>
        <authorList>
            <person name="Schroeder B."/>
            <person name="Wrocklage C."/>
            <person name="Pan C."/>
            <person name="Jaeger R."/>
            <person name="Koesters B."/>
            <person name="Schaefer H."/>
            <person name="Elsaesser H.-P."/>
            <person name="Mann M."/>
            <person name="Hasilik A."/>
        </authorList>
    </citation>
    <scope>SUBCELLULAR LOCATION [LARGE SCALE ANALYSIS]</scope>
    <source>
        <tissue>Placenta</tissue>
    </source>
</reference>
<reference key="9">
    <citation type="journal article" date="2009" name="J. Biol. Chem.">
        <title>Identification of a disulfide bridge essential for transport function of the human proton-coupled amino acid transporter hPAT1.</title>
        <authorList>
            <person name="Dorn M."/>
            <person name="Weiwad M."/>
            <person name="Markwardt F."/>
            <person name="Laug L."/>
            <person name="Rudolph R."/>
            <person name="Brandsch M."/>
            <person name="Bosse-Doenecke E."/>
        </authorList>
    </citation>
    <scope>FUNCTION</scope>
    <scope>TRANSPORTER ACTIVITY</scope>
    <scope>BIOPHYSICOCHEMICAL PROPERTIES</scope>
    <scope>SUBCELLULAR LOCATION</scope>
    <scope>DISULFIDE BOND</scope>
    <scope>TOPOLOGY MODEL</scope>
    <scope>MUTAGENESIS OF CYS-180; CYS-329 AND CYS-473</scope>
</reference>
<keyword id="KW-0025">Alternative splicing</keyword>
<keyword id="KW-0029">Amino-acid transport</keyword>
<keyword id="KW-1003">Cell membrane</keyword>
<keyword id="KW-1015">Disulfide bond</keyword>
<keyword id="KW-0325">Glycoprotein</keyword>
<keyword id="KW-0458">Lysosome</keyword>
<keyword id="KW-0472">Membrane</keyword>
<keyword id="KW-1267">Proteomics identification</keyword>
<keyword id="KW-1185">Reference proteome</keyword>
<keyword id="KW-0769">Symport</keyword>
<keyword id="KW-0812">Transmembrane</keyword>
<keyword id="KW-1133">Transmembrane helix</keyword>
<keyword id="KW-0813">Transport</keyword>
<accession>Q7Z2H8</accession>
<accession>C9JI34</accession>
<accession>Q1LZ56</accession>
<accession>Q7Z7C0</accession>
<accession>Q86YK4</accession>
<accession>Q96M74</accession>
<sequence length="476" mass="53076">MSTQRLRNEDYHDYSSTDVSPEESPSEGLNNLSSPGSYQRFGQSNSTTWFQTLIHLLKGNIGTGLLGLPLAVKNAGIVMGPISLLIIGIVAVHCMGILVKCAHHFCRRLNKSFVDYGDTVMYGLESSPCSWLRNHAHWGRRVVDFFLIVTQLGFCCVYFVFLADNFKQVIEAANGTTNNCHNNETVILTPTMDSRLYMLSFLPFLVLLVFIRNLRALSIFSLLANITMLVSLVMIYQFIVQRIPDPSHLPLVAPWKTYPLFFGTAIFSFEGIGMVLPLENKMKDPRKFPLILYLGMVIVTILYISLGCLGYLQFGANIQGSITLNLPNCWLYQSVKLLYSIGIFFTYALQFYVPAEIIIPFFVSRAPEHCELVVDLFVRTVLVCLTCILAILIPRLDLVISLVGSVSSSALALIIPPLLEVTTFYSEGMSPLTIFKDALISILGFVGFVVGTYEALYELIQPSNAPIFINSTCAFI</sequence>
<evidence type="ECO:0000250" key="1">
    <source>
        <dbReference type="UniProtKB" id="Q8K4D3"/>
    </source>
</evidence>
<evidence type="ECO:0000250" key="2">
    <source>
        <dbReference type="UniProtKB" id="Q924A5"/>
    </source>
</evidence>
<evidence type="ECO:0000255" key="3"/>
<evidence type="ECO:0000256" key="4">
    <source>
        <dbReference type="SAM" id="MobiDB-lite"/>
    </source>
</evidence>
<evidence type="ECO:0000269" key="5">
    <source>
    </source>
</evidence>
<evidence type="ECO:0000269" key="6">
    <source>
    </source>
</evidence>
<evidence type="ECO:0000269" key="7">
    <source>
    </source>
</evidence>
<evidence type="ECO:0000269" key="8">
    <source>
    </source>
</evidence>
<evidence type="ECO:0000303" key="9">
    <source>
    </source>
</evidence>
<evidence type="ECO:0000303" key="10">
    <source>
    </source>
</evidence>
<evidence type="ECO:0000303" key="11">
    <source>
    </source>
</evidence>
<evidence type="ECO:0000305" key="12"/>
<evidence type="ECO:0000305" key="13">
    <source>
    </source>
</evidence>
<evidence type="ECO:0000312" key="14">
    <source>
        <dbReference type="HGNC" id="HGNC:18761"/>
    </source>
</evidence>
<proteinExistence type="evidence at protein level"/>
<comment type="function">
    <text evidence="2 5 6 8">Electrogenic proton/amino acid symporter with selectivity for small apolar L-amino acids, their D-enantiomers and selected amino acid derivatives such as 4-aminobutanoate/GABA (PubMed:12527723, PubMed:12809675, PubMed:19549785). May be involved in the efflux from the lysosomal compartment of neutral amino acids resulting from proteolysis (By similarity). May play a role in specifying sites for exocytosis in neurons (By similarity).</text>
</comment>
<comment type="catalytic activity">
    <reaction evidence="5 6 8">
        <text>glycine(in) + H(+)(in) = glycine(out) + H(+)(out)</text>
        <dbReference type="Rhea" id="RHEA:28899"/>
        <dbReference type="ChEBI" id="CHEBI:15378"/>
        <dbReference type="ChEBI" id="CHEBI:57305"/>
    </reaction>
</comment>
<comment type="catalytic activity">
    <reaction evidence="5 6">
        <text>L-alanine(in) + H(+)(in) = L-alanine(out) + H(+)(out)</text>
        <dbReference type="Rhea" id="RHEA:29443"/>
        <dbReference type="ChEBI" id="CHEBI:15378"/>
        <dbReference type="ChEBI" id="CHEBI:57972"/>
    </reaction>
</comment>
<comment type="catalytic activity">
    <reaction evidence="1">
        <text>D-alanine(in) + H(+)(in) = D-alanine(out) + H(+)(out)</text>
        <dbReference type="Rhea" id="RHEA:28903"/>
        <dbReference type="ChEBI" id="CHEBI:15378"/>
        <dbReference type="ChEBI" id="CHEBI:57416"/>
    </reaction>
</comment>
<comment type="catalytic activity">
    <reaction evidence="5 6 8">
        <text>L-proline(out) + H(+)(out) = L-proline(in) + H(+)(in)</text>
        <dbReference type="Rhea" id="RHEA:28963"/>
        <dbReference type="ChEBI" id="CHEBI:15378"/>
        <dbReference type="ChEBI" id="CHEBI:60039"/>
    </reaction>
</comment>
<comment type="catalytic activity">
    <reaction evidence="1">
        <text>D-proline(out) + H(+)(out) = D-proline(in) + H(+)(in)</text>
        <dbReference type="Rhea" id="RHEA:70643"/>
        <dbReference type="ChEBI" id="CHEBI:15378"/>
        <dbReference type="ChEBI" id="CHEBI:57726"/>
    </reaction>
</comment>
<comment type="catalytic activity">
    <reaction evidence="5">
        <text>D-serine(out) + H(+)(out) = D-serine(in) + H(+)(in)</text>
        <dbReference type="Rhea" id="RHEA:70647"/>
        <dbReference type="ChEBI" id="CHEBI:15378"/>
        <dbReference type="ChEBI" id="CHEBI:35247"/>
    </reaction>
</comment>
<comment type="catalytic activity">
    <reaction evidence="1">
        <text>L-serine(in) + H(+)(in) = L-serine(out) + H(+)(out)</text>
        <dbReference type="Rhea" id="RHEA:28887"/>
        <dbReference type="ChEBI" id="CHEBI:15378"/>
        <dbReference type="ChEBI" id="CHEBI:33384"/>
    </reaction>
</comment>
<comment type="catalytic activity">
    <reaction evidence="1">
        <text>4-aminobutanoate(in) + H(+)(in) = 4-aminobutanoate(out) + H(+)(out)</text>
        <dbReference type="Rhea" id="RHEA:28915"/>
        <dbReference type="ChEBI" id="CHEBI:15378"/>
        <dbReference type="ChEBI" id="CHEBI:59888"/>
    </reaction>
</comment>
<comment type="catalytic activity">
    <reaction evidence="1">
        <text>beta-alanine(in) + H(+)(in) = beta-alanine(out) + H(+)(out)</text>
        <dbReference type="Rhea" id="RHEA:29459"/>
        <dbReference type="ChEBI" id="CHEBI:15378"/>
        <dbReference type="ChEBI" id="CHEBI:57966"/>
    </reaction>
</comment>
<comment type="biophysicochemical properties">
    <kinetics>
        <KM evidence="5">2.3 mM for glycine</KM>
        <KM evidence="8">11.4 mM for glycine (at pH 6.5)</KM>
    </kinetics>
    <phDependence>
        <text evidence="8">Optimum pH is 5.0-5.5.</text>
    </phDependence>
</comment>
<comment type="interaction">
    <interactant intactId="EBI-9978258">
        <id>Q7Z2H8</id>
    </interactant>
    <interactant intactId="EBI-77613">
        <id>P05067</id>
        <label>APP</label>
    </interactant>
    <organismsDiffer>false</organismsDiffer>
    <experiments>3</experiments>
</comment>
<comment type="interaction">
    <interactant intactId="EBI-9978258">
        <id>Q7Z2H8</id>
    </interactant>
    <interactant intactId="EBI-11988865">
        <id>A5PKU2</id>
        <label>TUSC5</label>
    </interactant>
    <organismsDiffer>false</organismsDiffer>
    <experiments>3</experiments>
</comment>
<comment type="subcellular location">
    <subcellularLocation>
        <location evidence="5 6 8">Cell membrane</location>
        <topology evidence="3">Multi-pass membrane protein</topology>
    </subcellularLocation>
    <subcellularLocation>
        <location evidence="5">Apical cell membrane</location>
        <topology evidence="3">Multi-pass membrane protein</topology>
    </subcellularLocation>
    <subcellularLocation>
        <location evidence="7">Lysosome membrane</location>
        <topology evidence="3">Multi-pass membrane protein</topology>
    </subcellularLocation>
    <text evidence="2">In neurons, colocalizes with the exocyst complex in the axonal processes.</text>
</comment>
<comment type="alternative products">
    <event type="alternative splicing"/>
    <isoform>
        <id>Q7Z2H8-1</id>
        <name>1</name>
        <sequence type="displayed"/>
    </isoform>
    <isoform>
        <id>Q7Z2H8-3</id>
        <name>2</name>
        <sequence type="described" ref="VSP_044392"/>
    </isoform>
    <isoform>
        <id>Q7Z2H8-4</id>
        <name>3</name>
        <sequence type="described" ref="VSP_044390 VSP_044391"/>
    </isoform>
</comment>
<comment type="similarity">
    <text evidence="12">Belongs to the amino acid/polyamine transporter 2 family.</text>
</comment>
<comment type="sequence caution" evidence="12">
    <conflict type="miscellaneous discrepancy">
        <sequence resource="EMBL-CDS" id="BAB71435"/>
    </conflict>
    <text>Aberrant splicing.</text>
</comment>
<organism>
    <name type="scientific">Homo sapiens</name>
    <name type="common">Human</name>
    <dbReference type="NCBI Taxonomy" id="9606"/>
    <lineage>
        <taxon>Eukaryota</taxon>
        <taxon>Metazoa</taxon>
        <taxon>Chordata</taxon>
        <taxon>Craniata</taxon>
        <taxon>Vertebrata</taxon>
        <taxon>Euteleostomi</taxon>
        <taxon>Mammalia</taxon>
        <taxon>Eutheria</taxon>
        <taxon>Euarchontoglires</taxon>
        <taxon>Primates</taxon>
        <taxon>Haplorrhini</taxon>
        <taxon>Catarrhini</taxon>
        <taxon>Hominidae</taxon>
        <taxon>Homo</taxon>
    </lineage>
</organism>
<gene>
    <name evidence="14" type="primary">SLC36A1</name>
    <name evidence="9" type="synonym">PAT1</name>
</gene>
<protein>
    <recommendedName>
        <fullName evidence="13">Proton-coupled amino acid transporter 1</fullName>
        <shortName evidence="13">Proton/amino acid transporter 1</shortName>
        <shortName evidence="10">hPAT1</shortName>
    </recommendedName>
    <alternativeName>
        <fullName evidence="14">Solute carrier family 36 member 1</fullName>
    </alternativeName>
</protein>